<reference key="1">
    <citation type="journal article" date="2003" name="Genome Res.">
        <title>Comparative genome analysis of Vibrio vulnificus, a marine pathogen.</title>
        <authorList>
            <person name="Chen C.-Y."/>
            <person name="Wu K.-M."/>
            <person name="Chang Y.-C."/>
            <person name="Chang C.-H."/>
            <person name="Tsai H.-C."/>
            <person name="Liao T.-L."/>
            <person name="Liu Y.-M."/>
            <person name="Chen H.-J."/>
            <person name="Shen A.B.-T."/>
            <person name="Li J.-C."/>
            <person name="Su T.-L."/>
            <person name="Shao C.-P."/>
            <person name="Lee C.-T."/>
            <person name="Hor L.-I."/>
            <person name="Tsai S.-F."/>
        </authorList>
    </citation>
    <scope>NUCLEOTIDE SEQUENCE [LARGE SCALE GENOMIC DNA]</scope>
    <source>
        <strain>YJ016</strain>
    </source>
</reference>
<evidence type="ECO:0000255" key="1">
    <source>
        <dbReference type="HAMAP-Rule" id="MF_01031"/>
    </source>
</evidence>
<evidence type="ECO:0000305" key="2"/>
<accession>Q7MP80</accession>
<keyword id="KW-0028">Amino-acid biosynthesis</keyword>
<keyword id="KW-0100">Branched-chain amino acid biosynthesis</keyword>
<keyword id="KW-0432">Leucine biosynthesis</keyword>
<keyword id="KW-0456">Lyase</keyword>
<organism>
    <name type="scientific">Vibrio vulnificus (strain YJ016)</name>
    <dbReference type="NCBI Taxonomy" id="196600"/>
    <lineage>
        <taxon>Bacteria</taxon>
        <taxon>Pseudomonadati</taxon>
        <taxon>Pseudomonadota</taxon>
        <taxon>Gammaproteobacteria</taxon>
        <taxon>Vibrionales</taxon>
        <taxon>Vibrionaceae</taxon>
        <taxon>Vibrio</taxon>
    </lineage>
</organism>
<comment type="function">
    <text evidence="1">Catalyzes the isomerization between 2-isopropylmalate and 3-isopropylmalate, via the formation of 2-isopropylmaleate.</text>
</comment>
<comment type="catalytic activity">
    <reaction evidence="1">
        <text>(2R,3S)-3-isopropylmalate = (2S)-2-isopropylmalate</text>
        <dbReference type="Rhea" id="RHEA:32287"/>
        <dbReference type="ChEBI" id="CHEBI:1178"/>
        <dbReference type="ChEBI" id="CHEBI:35121"/>
        <dbReference type="EC" id="4.2.1.33"/>
    </reaction>
</comment>
<comment type="pathway">
    <text evidence="1">Amino-acid biosynthesis; L-leucine biosynthesis; L-leucine from 3-methyl-2-oxobutanoate: step 2/4.</text>
</comment>
<comment type="subunit">
    <text evidence="1">Heterodimer of LeuC and LeuD.</text>
</comment>
<comment type="similarity">
    <text evidence="1">Belongs to the LeuD family. LeuD type 1 subfamily.</text>
</comment>
<comment type="sequence caution" evidence="2">
    <conflict type="erroneous initiation">
        <sequence resource="EMBL-CDS" id="BAC93248"/>
    </conflict>
</comment>
<name>LEUD_VIBVY</name>
<protein>
    <recommendedName>
        <fullName evidence="1">3-isopropylmalate dehydratase small subunit</fullName>
        <ecNumber evidence="1">4.2.1.33</ecNumber>
    </recommendedName>
    <alternativeName>
        <fullName evidence="1">Alpha-IPM isomerase</fullName>
        <shortName evidence="1">IPMI</shortName>
    </alternativeName>
    <alternativeName>
        <fullName evidence="1">Isopropylmalate isomerase</fullName>
    </alternativeName>
</protein>
<gene>
    <name evidence="1" type="primary">leuD</name>
    <name type="ordered locus">VV0484</name>
</gene>
<sequence length="200" mass="22590">MQGFKQHTGLVVPLDAANVDTDAIIPKQFLQKVSRLGFGKHLFHDWRFLDDAGEQPNPEFVMNHARYQGASILLARENFGCGSSREHAPWALADYGIRAMIAPSFADIFYGNSINNQMVPVRLTEQEVDELFQYVQATEGAQIEVDLEALKVRANGKEYSFEIDDFRRHCLLNGLDHIGLTLQHEDKIAAFEADIPAFLR</sequence>
<proteinExistence type="inferred from homology"/>
<dbReference type="EC" id="4.2.1.33" evidence="1"/>
<dbReference type="EMBL" id="BA000037">
    <property type="protein sequence ID" value="BAC93248.1"/>
    <property type="status" value="ALT_INIT"/>
    <property type="molecule type" value="Genomic_DNA"/>
</dbReference>
<dbReference type="RefSeq" id="WP_011149402.1">
    <property type="nucleotide sequence ID" value="NC_005139.1"/>
</dbReference>
<dbReference type="SMR" id="Q7MP80"/>
<dbReference type="STRING" id="672.VV93_v1c04520"/>
<dbReference type="GeneID" id="93894964"/>
<dbReference type="KEGG" id="vvy:VV0484"/>
<dbReference type="PATRIC" id="fig|196600.6.peg.510"/>
<dbReference type="eggNOG" id="COG0066">
    <property type="taxonomic scope" value="Bacteria"/>
</dbReference>
<dbReference type="HOGENOM" id="CLU_081378_0_3_6"/>
<dbReference type="UniPathway" id="UPA00048">
    <property type="reaction ID" value="UER00071"/>
</dbReference>
<dbReference type="Proteomes" id="UP000002675">
    <property type="component" value="Chromosome I"/>
</dbReference>
<dbReference type="GO" id="GO:0009316">
    <property type="term" value="C:3-isopropylmalate dehydratase complex"/>
    <property type="evidence" value="ECO:0007669"/>
    <property type="project" value="InterPro"/>
</dbReference>
<dbReference type="GO" id="GO:0003861">
    <property type="term" value="F:3-isopropylmalate dehydratase activity"/>
    <property type="evidence" value="ECO:0007669"/>
    <property type="project" value="UniProtKB-UniRule"/>
</dbReference>
<dbReference type="GO" id="GO:0009098">
    <property type="term" value="P:L-leucine biosynthetic process"/>
    <property type="evidence" value="ECO:0007669"/>
    <property type="project" value="UniProtKB-UniRule"/>
</dbReference>
<dbReference type="CDD" id="cd01577">
    <property type="entry name" value="IPMI_Swivel"/>
    <property type="match status" value="1"/>
</dbReference>
<dbReference type="FunFam" id="3.20.19.10:FF:000003">
    <property type="entry name" value="3-isopropylmalate dehydratase small subunit"/>
    <property type="match status" value="1"/>
</dbReference>
<dbReference type="Gene3D" id="3.20.19.10">
    <property type="entry name" value="Aconitase, domain 4"/>
    <property type="match status" value="1"/>
</dbReference>
<dbReference type="HAMAP" id="MF_01031">
    <property type="entry name" value="LeuD_type1"/>
    <property type="match status" value="1"/>
</dbReference>
<dbReference type="InterPro" id="IPR004431">
    <property type="entry name" value="3-IsopropMal_deHydase_ssu"/>
</dbReference>
<dbReference type="InterPro" id="IPR015928">
    <property type="entry name" value="Aconitase/3IPM_dehydase_swvl"/>
</dbReference>
<dbReference type="InterPro" id="IPR000573">
    <property type="entry name" value="AconitaseA/IPMdHydase_ssu_swvl"/>
</dbReference>
<dbReference type="InterPro" id="IPR033940">
    <property type="entry name" value="IPMI_Swivel"/>
</dbReference>
<dbReference type="InterPro" id="IPR050075">
    <property type="entry name" value="LeuD"/>
</dbReference>
<dbReference type="NCBIfam" id="TIGR00171">
    <property type="entry name" value="leuD"/>
    <property type="match status" value="1"/>
</dbReference>
<dbReference type="NCBIfam" id="NF002458">
    <property type="entry name" value="PRK01641.1"/>
    <property type="match status" value="1"/>
</dbReference>
<dbReference type="PANTHER" id="PTHR43345:SF5">
    <property type="entry name" value="3-ISOPROPYLMALATE DEHYDRATASE SMALL SUBUNIT"/>
    <property type="match status" value="1"/>
</dbReference>
<dbReference type="PANTHER" id="PTHR43345">
    <property type="entry name" value="3-ISOPROPYLMALATE DEHYDRATASE SMALL SUBUNIT 2-RELATED-RELATED"/>
    <property type="match status" value="1"/>
</dbReference>
<dbReference type="Pfam" id="PF00694">
    <property type="entry name" value="Aconitase_C"/>
    <property type="match status" value="1"/>
</dbReference>
<dbReference type="SUPFAM" id="SSF52016">
    <property type="entry name" value="LeuD/IlvD-like"/>
    <property type="match status" value="1"/>
</dbReference>
<feature type="chain" id="PRO_0000141909" description="3-isopropylmalate dehydratase small subunit">
    <location>
        <begin position="1"/>
        <end position="200"/>
    </location>
</feature>